<protein>
    <recommendedName>
        <fullName evidence="1">S-adenosylmethionine synthase</fullName>
        <shortName evidence="1">AdoMet synthase</shortName>
        <ecNumber evidence="1">2.5.1.6</ecNumber>
    </recommendedName>
    <alternativeName>
        <fullName evidence="1">MAT</fullName>
    </alternativeName>
    <alternativeName>
        <fullName evidence="1">Methionine adenosyltransferase</fullName>
    </alternativeName>
</protein>
<name>METK_METPP</name>
<proteinExistence type="inferred from homology"/>
<accession>A2SKW6</accession>
<comment type="function">
    <text evidence="1">Catalyzes the formation of S-adenosylmethionine (AdoMet) from methionine and ATP. The overall synthetic reaction is composed of two sequential steps, AdoMet formation and the subsequent tripolyphosphate hydrolysis which occurs prior to release of AdoMet from the enzyme.</text>
</comment>
<comment type="catalytic activity">
    <reaction evidence="1">
        <text>L-methionine + ATP + H2O = S-adenosyl-L-methionine + phosphate + diphosphate</text>
        <dbReference type="Rhea" id="RHEA:21080"/>
        <dbReference type="ChEBI" id="CHEBI:15377"/>
        <dbReference type="ChEBI" id="CHEBI:30616"/>
        <dbReference type="ChEBI" id="CHEBI:33019"/>
        <dbReference type="ChEBI" id="CHEBI:43474"/>
        <dbReference type="ChEBI" id="CHEBI:57844"/>
        <dbReference type="ChEBI" id="CHEBI:59789"/>
        <dbReference type="EC" id="2.5.1.6"/>
    </reaction>
</comment>
<comment type="cofactor">
    <cofactor evidence="1">
        <name>Mg(2+)</name>
        <dbReference type="ChEBI" id="CHEBI:18420"/>
    </cofactor>
    <text evidence="1">Binds 2 divalent ions per subunit.</text>
</comment>
<comment type="cofactor">
    <cofactor evidence="1">
        <name>K(+)</name>
        <dbReference type="ChEBI" id="CHEBI:29103"/>
    </cofactor>
    <text evidence="1">Binds 1 potassium ion per subunit.</text>
</comment>
<comment type="pathway">
    <text evidence="1">Amino-acid biosynthesis; S-adenosyl-L-methionine biosynthesis; S-adenosyl-L-methionine from L-methionine: step 1/1.</text>
</comment>
<comment type="subunit">
    <text evidence="1">Homotetramer; dimer of dimers.</text>
</comment>
<comment type="subcellular location">
    <subcellularLocation>
        <location evidence="1">Cytoplasm</location>
    </subcellularLocation>
</comment>
<comment type="similarity">
    <text evidence="1">Belongs to the AdoMet synthase family.</text>
</comment>
<gene>
    <name evidence="1" type="primary">metK</name>
    <name type="ordered locus">Mpe_A3252</name>
</gene>
<feature type="chain" id="PRO_0000302937" description="S-adenosylmethionine synthase">
    <location>
        <begin position="1"/>
        <end position="393"/>
    </location>
</feature>
<feature type="region of interest" description="Flexible loop" evidence="1">
    <location>
        <begin position="100"/>
        <end position="110"/>
    </location>
</feature>
<feature type="binding site" description="in other chain" evidence="1">
    <location>
        <position position="16"/>
    </location>
    <ligand>
        <name>ATP</name>
        <dbReference type="ChEBI" id="CHEBI:30616"/>
        <note>ligand shared between two neighboring subunits</note>
    </ligand>
</feature>
<feature type="binding site" evidence="1">
    <location>
        <position position="18"/>
    </location>
    <ligand>
        <name>Mg(2+)</name>
        <dbReference type="ChEBI" id="CHEBI:18420"/>
    </ligand>
</feature>
<feature type="binding site" evidence="1">
    <location>
        <position position="44"/>
    </location>
    <ligand>
        <name>K(+)</name>
        <dbReference type="ChEBI" id="CHEBI:29103"/>
    </ligand>
</feature>
<feature type="binding site" description="in other chain" evidence="1">
    <location>
        <position position="57"/>
    </location>
    <ligand>
        <name>L-methionine</name>
        <dbReference type="ChEBI" id="CHEBI:57844"/>
        <note>ligand shared between two neighboring subunits</note>
    </ligand>
</feature>
<feature type="binding site" description="in other chain" evidence="1">
    <location>
        <position position="100"/>
    </location>
    <ligand>
        <name>L-methionine</name>
        <dbReference type="ChEBI" id="CHEBI:57844"/>
        <note>ligand shared between two neighboring subunits</note>
    </ligand>
</feature>
<feature type="binding site" description="in other chain" evidence="1">
    <location>
        <begin position="167"/>
        <end position="169"/>
    </location>
    <ligand>
        <name>ATP</name>
        <dbReference type="ChEBI" id="CHEBI:30616"/>
        <note>ligand shared between two neighboring subunits</note>
    </ligand>
</feature>
<feature type="binding site" description="in other chain" evidence="1">
    <location>
        <begin position="238"/>
        <end position="239"/>
    </location>
    <ligand>
        <name>ATP</name>
        <dbReference type="ChEBI" id="CHEBI:30616"/>
        <note>ligand shared between two neighboring subunits</note>
    </ligand>
</feature>
<feature type="binding site" evidence="1">
    <location>
        <position position="247"/>
    </location>
    <ligand>
        <name>ATP</name>
        <dbReference type="ChEBI" id="CHEBI:30616"/>
        <note>ligand shared between two neighboring subunits</note>
    </ligand>
</feature>
<feature type="binding site" evidence="1">
    <location>
        <position position="247"/>
    </location>
    <ligand>
        <name>L-methionine</name>
        <dbReference type="ChEBI" id="CHEBI:57844"/>
        <note>ligand shared between two neighboring subunits</note>
    </ligand>
</feature>
<feature type="binding site" description="in other chain" evidence="1">
    <location>
        <begin position="253"/>
        <end position="254"/>
    </location>
    <ligand>
        <name>ATP</name>
        <dbReference type="ChEBI" id="CHEBI:30616"/>
        <note>ligand shared between two neighboring subunits</note>
    </ligand>
</feature>
<feature type="binding site" evidence="1">
    <location>
        <position position="270"/>
    </location>
    <ligand>
        <name>ATP</name>
        <dbReference type="ChEBI" id="CHEBI:30616"/>
        <note>ligand shared between two neighboring subunits</note>
    </ligand>
</feature>
<feature type="binding site" evidence="1">
    <location>
        <position position="274"/>
    </location>
    <ligand>
        <name>ATP</name>
        <dbReference type="ChEBI" id="CHEBI:30616"/>
        <note>ligand shared between two neighboring subunits</note>
    </ligand>
</feature>
<feature type="binding site" description="in other chain" evidence="1">
    <location>
        <position position="278"/>
    </location>
    <ligand>
        <name>L-methionine</name>
        <dbReference type="ChEBI" id="CHEBI:57844"/>
        <note>ligand shared between two neighboring subunits</note>
    </ligand>
</feature>
<organism>
    <name type="scientific">Methylibium petroleiphilum (strain ATCC BAA-1232 / LMG 22953 / PM1)</name>
    <dbReference type="NCBI Taxonomy" id="420662"/>
    <lineage>
        <taxon>Bacteria</taxon>
        <taxon>Pseudomonadati</taxon>
        <taxon>Pseudomonadota</taxon>
        <taxon>Betaproteobacteria</taxon>
        <taxon>Burkholderiales</taxon>
        <taxon>Sphaerotilaceae</taxon>
        <taxon>Methylibium</taxon>
    </lineage>
</organism>
<sequence>MANDFLFTSESVSEGHPDKVADQISDAILDAIFAQDPRSRVAAETLTNTGLVVLAGEITTNAHVDYIQVARDTIKRIGYDNTEYGIDYKGCAVLVAYDKQSNDIAQGVDQASDDHLNTGAGDQGLMFGYACDETPELMPAPIYYAHRLVERQAQLRKDGRLPFLRPDAKSQVTMRYVDGKPHSIDTVVLSTQHSPDQSETAKKMKASFTEAIIEEIIKPVLPKEWLKDTKYLINPTGRFVIGGPQGDCGLTGRKIIVDTYGGACPHGGGAFSGKDPTKVDRSAAYAARYVAKNIVAAGLARQCQIQVAYAIGVARPMNITVYTEGTGVIPDDQLARLVAEHFDLRPKGIIQMLDLLRPIYEKTAAYGHFGREEPEFSWEKTDKANALRAAAGR</sequence>
<dbReference type="EC" id="2.5.1.6" evidence="1"/>
<dbReference type="EMBL" id="CP000555">
    <property type="protein sequence ID" value="ABM96205.1"/>
    <property type="molecule type" value="Genomic_DNA"/>
</dbReference>
<dbReference type="RefSeq" id="WP_011830828.1">
    <property type="nucleotide sequence ID" value="NC_008825.1"/>
</dbReference>
<dbReference type="SMR" id="A2SKW6"/>
<dbReference type="STRING" id="420662.Mpe_A3252"/>
<dbReference type="KEGG" id="mpt:Mpe_A3252"/>
<dbReference type="eggNOG" id="COG0192">
    <property type="taxonomic scope" value="Bacteria"/>
</dbReference>
<dbReference type="HOGENOM" id="CLU_041802_1_1_4"/>
<dbReference type="UniPathway" id="UPA00315">
    <property type="reaction ID" value="UER00080"/>
</dbReference>
<dbReference type="Proteomes" id="UP000000366">
    <property type="component" value="Chromosome"/>
</dbReference>
<dbReference type="GO" id="GO:0005737">
    <property type="term" value="C:cytoplasm"/>
    <property type="evidence" value="ECO:0007669"/>
    <property type="project" value="UniProtKB-SubCell"/>
</dbReference>
<dbReference type="GO" id="GO:0005524">
    <property type="term" value="F:ATP binding"/>
    <property type="evidence" value="ECO:0007669"/>
    <property type="project" value="UniProtKB-UniRule"/>
</dbReference>
<dbReference type="GO" id="GO:0000287">
    <property type="term" value="F:magnesium ion binding"/>
    <property type="evidence" value="ECO:0007669"/>
    <property type="project" value="UniProtKB-UniRule"/>
</dbReference>
<dbReference type="GO" id="GO:0004478">
    <property type="term" value="F:methionine adenosyltransferase activity"/>
    <property type="evidence" value="ECO:0007669"/>
    <property type="project" value="UniProtKB-UniRule"/>
</dbReference>
<dbReference type="GO" id="GO:0006730">
    <property type="term" value="P:one-carbon metabolic process"/>
    <property type="evidence" value="ECO:0007669"/>
    <property type="project" value="UniProtKB-KW"/>
</dbReference>
<dbReference type="GO" id="GO:0006556">
    <property type="term" value="P:S-adenosylmethionine biosynthetic process"/>
    <property type="evidence" value="ECO:0007669"/>
    <property type="project" value="UniProtKB-UniRule"/>
</dbReference>
<dbReference type="CDD" id="cd18079">
    <property type="entry name" value="S-AdoMet_synt"/>
    <property type="match status" value="1"/>
</dbReference>
<dbReference type="FunFam" id="3.30.300.10:FF:000003">
    <property type="entry name" value="S-adenosylmethionine synthase"/>
    <property type="match status" value="1"/>
</dbReference>
<dbReference type="FunFam" id="3.30.300.10:FF:000004">
    <property type="entry name" value="S-adenosylmethionine synthase"/>
    <property type="match status" value="1"/>
</dbReference>
<dbReference type="Gene3D" id="3.30.300.10">
    <property type="match status" value="3"/>
</dbReference>
<dbReference type="HAMAP" id="MF_00086">
    <property type="entry name" value="S_AdoMet_synth1"/>
    <property type="match status" value="1"/>
</dbReference>
<dbReference type="InterPro" id="IPR022631">
    <property type="entry name" value="ADOMET_SYNTHASE_CS"/>
</dbReference>
<dbReference type="InterPro" id="IPR022630">
    <property type="entry name" value="S-AdoMet_synt_C"/>
</dbReference>
<dbReference type="InterPro" id="IPR022629">
    <property type="entry name" value="S-AdoMet_synt_central"/>
</dbReference>
<dbReference type="InterPro" id="IPR022628">
    <property type="entry name" value="S-AdoMet_synt_N"/>
</dbReference>
<dbReference type="InterPro" id="IPR002133">
    <property type="entry name" value="S-AdoMet_synthetase"/>
</dbReference>
<dbReference type="InterPro" id="IPR022636">
    <property type="entry name" value="S-AdoMet_synthetase_sfam"/>
</dbReference>
<dbReference type="NCBIfam" id="TIGR01034">
    <property type="entry name" value="metK"/>
    <property type="match status" value="1"/>
</dbReference>
<dbReference type="PANTHER" id="PTHR11964">
    <property type="entry name" value="S-ADENOSYLMETHIONINE SYNTHETASE"/>
    <property type="match status" value="1"/>
</dbReference>
<dbReference type="Pfam" id="PF02773">
    <property type="entry name" value="S-AdoMet_synt_C"/>
    <property type="match status" value="1"/>
</dbReference>
<dbReference type="Pfam" id="PF02772">
    <property type="entry name" value="S-AdoMet_synt_M"/>
    <property type="match status" value="1"/>
</dbReference>
<dbReference type="Pfam" id="PF00438">
    <property type="entry name" value="S-AdoMet_synt_N"/>
    <property type="match status" value="1"/>
</dbReference>
<dbReference type="PIRSF" id="PIRSF000497">
    <property type="entry name" value="MAT"/>
    <property type="match status" value="1"/>
</dbReference>
<dbReference type="SUPFAM" id="SSF55973">
    <property type="entry name" value="S-adenosylmethionine synthetase"/>
    <property type="match status" value="3"/>
</dbReference>
<dbReference type="PROSITE" id="PS00376">
    <property type="entry name" value="ADOMET_SYNTHASE_1"/>
    <property type="match status" value="1"/>
</dbReference>
<dbReference type="PROSITE" id="PS00377">
    <property type="entry name" value="ADOMET_SYNTHASE_2"/>
    <property type="match status" value="1"/>
</dbReference>
<evidence type="ECO:0000255" key="1">
    <source>
        <dbReference type="HAMAP-Rule" id="MF_00086"/>
    </source>
</evidence>
<reference key="1">
    <citation type="journal article" date="2007" name="J. Bacteriol.">
        <title>Whole-genome analysis of the methyl tert-butyl ether-degrading beta-proteobacterium Methylibium petroleiphilum PM1.</title>
        <authorList>
            <person name="Kane S.R."/>
            <person name="Chakicherla A.Y."/>
            <person name="Chain P.S.G."/>
            <person name="Schmidt R."/>
            <person name="Shin M.W."/>
            <person name="Legler T.C."/>
            <person name="Scow K.M."/>
            <person name="Larimer F.W."/>
            <person name="Lucas S.M."/>
            <person name="Richardson P.M."/>
            <person name="Hristova K.R."/>
        </authorList>
    </citation>
    <scope>NUCLEOTIDE SEQUENCE [LARGE SCALE GENOMIC DNA]</scope>
    <source>
        <strain>ATCC BAA-1232 / LMG 22953 / PM1</strain>
    </source>
</reference>
<keyword id="KW-0067">ATP-binding</keyword>
<keyword id="KW-0963">Cytoplasm</keyword>
<keyword id="KW-0460">Magnesium</keyword>
<keyword id="KW-0479">Metal-binding</keyword>
<keyword id="KW-0547">Nucleotide-binding</keyword>
<keyword id="KW-0554">One-carbon metabolism</keyword>
<keyword id="KW-0630">Potassium</keyword>
<keyword id="KW-1185">Reference proteome</keyword>
<keyword id="KW-0808">Transferase</keyword>